<reference key="1">
    <citation type="journal article" date="2000" name="Nature">
        <title>The genome sequence of the food-borne pathogen Campylobacter jejuni reveals hypervariable sequences.</title>
        <authorList>
            <person name="Parkhill J."/>
            <person name="Wren B.W."/>
            <person name="Mungall K.L."/>
            <person name="Ketley J.M."/>
            <person name="Churcher C.M."/>
            <person name="Basham D."/>
            <person name="Chillingworth T."/>
            <person name="Davies R.M."/>
            <person name="Feltwell T."/>
            <person name="Holroyd S."/>
            <person name="Jagels K."/>
            <person name="Karlyshev A.V."/>
            <person name="Moule S."/>
            <person name="Pallen M.J."/>
            <person name="Penn C.W."/>
            <person name="Quail M.A."/>
            <person name="Rajandream M.A."/>
            <person name="Rutherford K.M."/>
            <person name="van Vliet A.H.M."/>
            <person name="Whitehead S."/>
            <person name="Barrell B.G."/>
        </authorList>
    </citation>
    <scope>NUCLEOTIDE SEQUENCE [LARGE SCALE GENOMIC DNA]</scope>
    <source>
        <strain>ATCC 700819 / NCTC 11168</strain>
    </source>
</reference>
<reference key="2">
    <citation type="journal article" date="2005" name="Proc. Natl. Acad. Sci. U.S.A.">
        <title>In vitro assembly of the undecaprenylpyrophosphate-linked heptasaccharide for prokaryotic N-linked glycosylation.</title>
        <authorList>
            <person name="Glover K.J."/>
            <person name="Weerapana E."/>
            <person name="Imperiali B."/>
        </authorList>
    </citation>
    <scope>FUNCTION</scope>
    <scope>CATALYTIC ACTIVITY</scope>
    <scope>PATHWAY</scope>
    <source>
        <strain>ATCC 700819 / NCTC 11168</strain>
    </source>
</reference>
<reference key="3">
    <citation type="journal article" date="2009" name="Biochemistry">
        <title>Campylobacter jejuni PglH is a single active site processive polymerase that utilizes product inhibition to limit sequential glycosyl transfer reactions.</title>
        <authorList>
            <person name="Troutman J.M."/>
            <person name="Imperiali B."/>
        </authorList>
    </citation>
    <scope>FUNCTION</scope>
    <scope>CATALYTIC ACTIVITY</scope>
    <scope>MUTAGENESIS OF GLU-42; GLU-50; GLU-172; GLU-180; ARG-190; GLU-266; GLU-274; GLU-309; GLU-317; GLU-347 AND GLU-355</scope>
</reference>
<reference evidence="8 9 10" key="4">
    <citation type="journal article" date="2018" name="Nat. Commun.">
        <title>Structural basis of the molecular ruler mechanism of a bacterial glycosyltransferase.</title>
        <authorList>
            <person name="Ramirez A.S."/>
            <person name="Boilevin J."/>
            <person name="Mehdipour A.R."/>
            <person name="Hummer G."/>
            <person name="Darbre T."/>
            <person name="Reymond J.L."/>
            <person name="Locher K.P."/>
        </authorList>
    </citation>
    <scope>X-RAY CRYSTALLOGRAPHY (2.30 ANGSTROMS) IN COMPLEXES WITH UDP-GALNAC; UDP; UDP-GALNAC ANALOG AND SUBSTRATE ANALOG</scope>
    <scope>FUNCTION</scope>
    <scope>CATALYTIC ACTIVITY</scope>
    <scope>SUBSTRATE SPECIFICITY</scope>
    <scope>DOMAIN</scope>
    <scope>MUTAGENESIS OF LYS-67; ARG-71; LYS-74; HIS-117; ARG-190; LYS-195; GLU-266; THR-270 AND GLU-274</scope>
</reference>
<protein>
    <recommendedName>
        <fullName>GalNAc-alpha-(1-&gt;4)-GalNAc-alpha-(1-&gt;3)-diNAcBac-PP-undecaprenol alpha-1,4-N-acetyl-D-galactosaminyltransferase</fullName>
        <ecNumber evidence="1 2 3">2.4.1.292</ecNumber>
    </recommendedName>
    <alternativeName>
        <fullName>Protein glycosylation H</fullName>
    </alternativeName>
</protein>
<comment type="function">
    <text evidence="1 2 3">Processive glycosyltransferase that is part of the biosynthetic pathway of the lipid-linked oligosaccharide (LLO) that serves as the glycan donor in bacterial protein N-glycosylation. Catalyzes the transfer of exactly three alpha-(1-&gt;4)-N-acetylgalactosamine (GalNAc) units to the growing LLO precursor, GalNAc-alpha-(1-&gt;4)-GalNAc-alpha-(1-&gt;3)-diNAcBac-PP-undecaprenyl (PubMed:16186480, PubMed:19159314, PubMed:29386647). Cannot accept UDP-GlcNAc as substrate (PubMed:29386647).</text>
</comment>
<comment type="catalytic activity">
    <reaction evidence="1 2 3">
        <text>N-acetyl-alpha-D-galactosaminyl-(1-&gt;4)-N-acetyl-alpha-D-galactosaminyl-(1-&gt;3)-N,N'-diacetyl-alpha-D-bacillosaminyl-tri-trans,heptacis-undecaprenyl diphosphate + 3 UDP-N-acetyl-alpha-D-galactosamine = [alpha-D-GalNAc-(1-&gt;4)]4-alpha-D-GalNAc-(1-&gt;3)-alpha-D-diNAcBac-tri-trans,hepta-cis-undecaprenyl diphosphate + 3 UDP + 3 H(+)</text>
        <dbReference type="Rhea" id="RHEA:34519"/>
        <dbReference type="ChEBI" id="CHEBI:15378"/>
        <dbReference type="ChEBI" id="CHEBI:58223"/>
        <dbReference type="ChEBI" id="CHEBI:67138"/>
        <dbReference type="ChEBI" id="CHEBI:68651"/>
        <dbReference type="ChEBI" id="CHEBI:68653"/>
        <dbReference type="EC" id="2.4.1.292"/>
    </reaction>
</comment>
<comment type="pathway">
    <text evidence="1">Protein modification; protein glycosylation.</text>
</comment>
<comment type="subcellular location">
    <subcellularLocation>
        <location evidence="7">Cell inner membrane</location>
        <topology evidence="7">Peripheral membrane protein</topology>
    </subcellularLocation>
</comment>
<comment type="domain">
    <text evidence="7">Contains an amphipathic helix (''ruler helix'') that has a dual role of facilitating membrane attachment and glycan counting. The ruler helix contains three positively charged side chains (Lys-67, Arg-71 and Lys-74) that can bind the pyrophosphate group of the LLO substrate and thus limit the addition of GalNAc units to three.</text>
</comment>
<comment type="miscellaneous">
    <text evidence="6">N-linked protein glycosylation in C.jejuni consists in the transfer of a heptasaccharide (GalNAc-alpha1,4-GalNAc-alpha1,4-(Glcbeta1,3)-GalNAc-alpha1,4-GalNAc-alpha1,4-GalNAc-alpha1,3-bacillosamine) from a membrane-anchored undecaprenylpyrophosphate (Und-PP)-linked donor to the Asn side chain of proteins at the Asn-X-Ser/Thr motif.</text>
</comment>
<comment type="similarity">
    <text evidence="5">Belongs to the glycosyltransferase group 1 family.</text>
</comment>
<organism>
    <name type="scientific">Campylobacter jejuni subsp. jejuni serotype O:2 (strain ATCC 700819 / NCTC 11168)</name>
    <dbReference type="NCBI Taxonomy" id="192222"/>
    <lineage>
        <taxon>Bacteria</taxon>
        <taxon>Pseudomonadati</taxon>
        <taxon>Campylobacterota</taxon>
        <taxon>Epsilonproteobacteria</taxon>
        <taxon>Campylobacterales</taxon>
        <taxon>Campylobacteraceae</taxon>
        <taxon>Campylobacter</taxon>
    </lineage>
</organism>
<name>PGLH_CAMJE</name>
<evidence type="ECO:0000269" key="1">
    <source>
    </source>
</evidence>
<evidence type="ECO:0000269" key="2">
    <source>
    </source>
</evidence>
<evidence type="ECO:0000269" key="3">
    <source>
    </source>
</evidence>
<evidence type="ECO:0000303" key="4">
    <source>
    </source>
</evidence>
<evidence type="ECO:0000305" key="5"/>
<evidence type="ECO:0000305" key="6">
    <source>
    </source>
</evidence>
<evidence type="ECO:0000305" key="7">
    <source>
    </source>
</evidence>
<evidence type="ECO:0007744" key="8">
    <source>
        <dbReference type="PDB" id="6EJI"/>
    </source>
</evidence>
<evidence type="ECO:0007744" key="9">
    <source>
        <dbReference type="PDB" id="6EJJ"/>
    </source>
</evidence>
<evidence type="ECO:0007744" key="10">
    <source>
        <dbReference type="PDB" id="6EJK"/>
    </source>
</evidence>
<dbReference type="EC" id="2.4.1.292" evidence="1 2 3"/>
<dbReference type="EMBL" id="AL111168">
    <property type="protein sequence ID" value="CAL35246.1"/>
    <property type="molecule type" value="Genomic_DNA"/>
</dbReference>
<dbReference type="PIR" id="D81317">
    <property type="entry name" value="D81317"/>
</dbReference>
<dbReference type="RefSeq" id="YP_002344522.1">
    <property type="nucleotide sequence ID" value="NC_002163.1"/>
</dbReference>
<dbReference type="PDB" id="6EJI">
    <property type="method" value="X-ray"/>
    <property type="resolution" value="2.30 A"/>
    <property type="chains" value="A/B=1-358"/>
</dbReference>
<dbReference type="PDB" id="6EJJ">
    <property type="method" value="X-ray"/>
    <property type="resolution" value="2.70 A"/>
    <property type="chains" value="A/B=1-358"/>
</dbReference>
<dbReference type="PDB" id="6EJK">
    <property type="method" value="X-ray"/>
    <property type="resolution" value="3.30 A"/>
    <property type="chains" value="A/B=2-358"/>
</dbReference>
<dbReference type="PDBsum" id="6EJI"/>
<dbReference type="PDBsum" id="6EJJ"/>
<dbReference type="PDBsum" id="6EJK"/>
<dbReference type="SMR" id="Q0P9C5"/>
<dbReference type="IntAct" id="Q0P9C5">
    <property type="interactions" value="1"/>
</dbReference>
<dbReference type="STRING" id="192222.Cj1129c"/>
<dbReference type="CAZy" id="GT4">
    <property type="family name" value="Glycosyltransferase Family 4"/>
</dbReference>
<dbReference type="PaxDb" id="192222-Cj1129c"/>
<dbReference type="EnsemblBacteria" id="CAL35246">
    <property type="protein sequence ID" value="CAL35246"/>
    <property type="gene ID" value="Cj1129c"/>
</dbReference>
<dbReference type="GeneID" id="905420"/>
<dbReference type="KEGG" id="cje:Cj1129c"/>
<dbReference type="PATRIC" id="fig|192222.6.peg.1111"/>
<dbReference type="eggNOG" id="COG0438">
    <property type="taxonomic scope" value="Bacteria"/>
</dbReference>
<dbReference type="HOGENOM" id="CLU_009583_0_0_7"/>
<dbReference type="OrthoDB" id="9775208at2"/>
<dbReference type="BioCyc" id="MetaCyc:MONOMER-17333"/>
<dbReference type="UniPathway" id="UPA00378"/>
<dbReference type="Proteomes" id="UP000000799">
    <property type="component" value="Chromosome"/>
</dbReference>
<dbReference type="GO" id="GO:0005886">
    <property type="term" value="C:plasma membrane"/>
    <property type="evidence" value="ECO:0007669"/>
    <property type="project" value="UniProtKB-SubCell"/>
</dbReference>
<dbReference type="GO" id="GO:0016758">
    <property type="term" value="F:hexosyltransferase activity"/>
    <property type="evidence" value="ECO:0000314"/>
    <property type="project" value="UniProtKB"/>
</dbReference>
<dbReference type="GO" id="GO:0018279">
    <property type="term" value="P:protein N-linked glycosylation via asparagine"/>
    <property type="evidence" value="ECO:0000314"/>
    <property type="project" value="UniProtKB"/>
</dbReference>
<dbReference type="FunFam" id="3.40.50.2000:FF:000575">
    <property type="entry name" value="GalNAc-alpha-(1-&gt;4)-GalNAc-alpha-(1-&gt;3)-diNAcBac-PP-undecaprenol alpha-1,4-N-acetyl-D-galactosaminyltransferase"/>
    <property type="match status" value="1"/>
</dbReference>
<dbReference type="Gene3D" id="3.40.50.2000">
    <property type="entry name" value="Glycogen Phosphorylase B"/>
    <property type="match status" value="2"/>
</dbReference>
<dbReference type="InterPro" id="IPR001296">
    <property type="entry name" value="Glyco_trans_1"/>
</dbReference>
<dbReference type="InterPro" id="IPR028098">
    <property type="entry name" value="Glyco_trans_4-like_N"/>
</dbReference>
<dbReference type="PANTHER" id="PTHR12526">
    <property type="entry name" value="GLYCOSYLTRANSFERASE"/>
    <property type="match status" value="1"/>
</dbReference>
<dbReference type="PANTHER" id="PTHR12526:SF630">
    <property type="entry name" value="GLYCOSYLTRANSFERASE"/>
    <property type="match status" value="1"/>
</dbReference>
<dbReference type="Pfam" id="PF13439">
    <property type="entry name" value="Glyco_transf_4"/>
    <property type="match status" value="1"/>
</dbReference>
<dbReference type="Pfam" id="PF00534">
    <property type="entry name" value="Glycos_transf_1"/>
    <property type="match status" value="1"/>
</dbReference>
<dbReference type="SUPFAM" id="SSF53756">
    <property type="entry name" value="UDP-Glycosyltransferase/glycogen phosphorylase"/>
    <property type="match status" value="1"/>
</dbReference>
<proteinExistence type="evidence at protein level"/>
<keyword id="KW-0002">3D-structure</keyword>
<keyword id="KW-0997">Cell inner membrane</keyword>
<keyword id="KW-1003">Cell membrane</keyword>
<keyword id="KW-0328">Glycosyltransferase</keyword>
<keyword id="KW-0472">Membrane</keyword>
<keyword id="KW-1185">Reference proteome</keyword>
<keyword id="KW-0808">Transferase</keyword>
<gene>
    <name evidence="4" type="primary">pglH</name>
    <name type="ordered locus">Cj1129c</name>
</gene>
<accession>Q0P9C5</accession>
<feature type="chain" id="PRO_0000422591" description="GalNAc-alpha-(1-&gt;4)-GalNAc-alpha-(1-&gt;3)-diNAcBac-PP-undecaprenol alpha-1,4-N-acetyl-D-galactosaminyltransferase">
    <location>
        <begin position="1"/>
        <end position="359"/>
    </location>
</feature>
<feature type="binding site" evidence="7">
    <location>
        <position position="17"/>
    </location>
    <ligand>
        <name>substrate</name>
    </ligand>
</feature>
<feature type="binding site" evidence="3">
    <location>
        <position position="45"/>
    </location>
    <ligand>
        <name>UDP-N-acetyl-alpha-D-galactosamine</name>
        <dbReference type="ChEBI" id="CHEBI:67138"/>
    </ligand>
</feature>
<feature type="binding site" evidence="7">
    <location>
        <begin position="71"/>
        <end position="74"/>
    </location>
    <ligand>
        <name>substrate</name>
    </ligand>
</feature>
<feature type="binding site" evidence="3">
    <location>
        <position position="117"/>
    </location>
    <ligand>
        <name>UDP-N-acetyl-alpha-D-galactosamine</name>
        <dbReference type="ChEBI" id="CHEBI:67138"/>
    </ligand>
</feature>
<feature type="binding site" evidence="7">
    <location>
        <position position="190"/>
    </location>
    <ligand>
        <name>substrate</name>
    </ligand>
</feature>
<feature type="binding site" evidence="3">
    <location>
        <position position="190"/>
    </location>
    <ligand>
        <name>UDP-N-acetyl-alpha-D-galactosamine</name>
        <dbReference type="ChEBI" id="CHEBI:67138"/>
    </ligand>
</feature>
<feature type="binding site" evidence="3">
    <location>
        <position position="195"/>
    </location>
    <ligand>
        <name>UDP-N-acetyl-alpha-D-galactosamine</name>
        <dbReference type="ChEBI" id="CHEBI:67138"/>
    </ligand>
</feature>
<feature type="binding site" evidence="3">
    <location>
        <position position="246"/>
    </location>
    <ligand>
        <name>UDP-N-acetyl-alpha-D-galactosamine</name>
        <dbReference type="ChEBI" id="CHEBI:67138"/>
    </ligand>
</feature>
<feature type="binding site" evidence="3">
    <location>
        <begin position="266"/>
        <end position="274"/>
    </location>
    <ligand>
        <name>UDP-N-acetyl-alpha-D-galactosamine</name>
        <dbReference type="ChEBI" id="CHEBI:67138"/>
    </ligand>
</feature>
<feature type="mutagenesis site" description="Complete loss of catalytic activity." evidence="3">
    <original>E</original>
    <variation>A</variation>
    <location>
        <position position="17"/>
    </location>
</feature>
<feature type="mutagenesis site" description="No effect." evidence="2">
    <original>E</original>
    <variation>A</variation>
    <location>
        <position position="42"/>
    </location>
</feature>
<feature type="mutagenesis site" description="No effect." evidence="2">
    <original>E</original>
    <variation>A</variation>
    <location>
        <position position="50"/>
    </location>
</feature>
<feature type="mutagenesis site" description="3-fold decrease in the turnover rate. Markedly accumulates the penta-LLO intermediate (Und-PP-BacGalNAc4). 1000-fold decrease in the turnover rate; when associated with A-71 and A-74." evidence="3">
    <original>K</original>
    <variation>A</variation>
    <location>
        <position position="67"/>
    </location>
</feature>
<feature type="mutagenesis site" description="6-fold decrease in the turnover rate. Slightly accumulates the tetra-LLO intermediate (Und-PP-BacGalNAc3). 1000-fold decrease in the turnover rate; when associated with A-67 and A-74." evidence="3">
    <original>R</original>
    <variation>A</variation>
    <location>
        <position position="71"/>
    </location>
</feature>
<feature type="mutagenesis site" description="10-fold decrease in the turnover rate. Accumulates the tri-LLO substrate (Und-PP-BacGalNAc2). 1000-fold decrease in the turnover rate; when associated with A-67 and A-71." evidence="3">
    <original>K</original>
    <variation>A</variation>
    <location>
        <position position="74"/>
    </location>
</feature>
<feature type="mutagenesis site" description="10-fold decrease in the turnover rate." evidence="3">
    <original>H</original>
    <variation>A</variation>
    <location>
        <position position="117"/>
    </location>
</feature>
<feature type="mutagenesis site" description="No effect." evidence="2">
    <original>E</original>
    <variation>A</variation>
    <location>
        <position position="172"/>
    </location>
</feature>
<feature type="mutagenesis site" description="No effect." evidence="2">
    <original>E</original>
    <variation>A</variation>
    <location>
        <position position="180"/>
    </location>
</feature>
<feature type="mutagenesis site" description="Abolishes catalytic activity." evidence="2 3">
    <original>R</original>
    <variation>A</variation>
    <location>
        <position position="190"/>
    </location>
</feature>
<feature type="mutagenesis site" description="Abolishes catalytic activity." evidence="3">
    <original>K</original>
    <variation>A</variation>
    <location>
        <position position="195"/>
    </location>
</feature>
<feature type="mutagenesis site" description="Abolishes catalytic activity." evidence="2 3">
    <original>E</original>
    <variation>A</variation>
    <location>
        <position position="266"/>
    </location>
</feature>
<feature type="mutagenesis site" description="5-fold decrease in the turnover rate." evidence="3">
    <original>T</original>
    <variation>A</variation>
    <location>
        <position position="270"/>
    </location>
</feature>
<feature type="mutagenesis site" description="Abolishes catalytic activity." evidence="2 3">
    <original>E</original>
    <variation>A</variation>
    <location>
        <position position="274"/>
    </location>
</feature>
<feature type="mutagenesis site" description="No effect." evidence="2">
    <original>E</original>
    <variation>A</variation>
    <location>
        <position position="309"/>
    </location>
</feature>
<feature type="mutagenesis site" description="No effect." evidence="2">
    <original>E</original>
    <variation>A</variation>
    <location>
        <position position="317"/>
    </location>
</feature>
<feature type="mutagenesis site" description="No effect." evidence="2">
    <original>E</original>
    <variation>A</variation>
    <location>
        <position position="347"/>
    </location>
</feature>
<feature type="mutagenesis site" description="No effect." evidence="2">
    <original>E</original>
    <variation>A</variation>
    <location>
        <position position="355"/>
    </location>
</feature>
<sequence>MMKISFIIATLNSGGAERALVTLANALCKEHEVSIIKFHAGESFYKLENEVKVTSLEQFRFDTLYHKIASRFKKFFALRKALKESKSDVFISFLDTTNIACIAAKIGLKTPLIISEHSNEAYLKPKIWRFLRRVSYPFCDALSVLGSSDKVYYERFVKRVKLLLNPCHFSDEISFDSSFEKENLVLFIGRLDHNKNPVMFLKAIAHLDKNLQENYKFVIAGDGQLRQELEYKVKSLGIKVDFLGRVENVKALYEKAKVLCLCSFVEGLPTVLIESLYFEVCRISSSYYNGAKDLIKDNHDGLLVGCDDEIALAKKLELVLNDENFRKELVNNAKQRCKDFEISHIKEEWLKLIAEVKNA</sequence>